<protein>
    <recommendedName>
        <fullName evidence="1">Serine--tRNA ligase</fullName>
        <ecNumber evidence="1">6.1.1.11</ecNumber>
    </recommendedName>
    <alternativeName>
        <fullName evidence="1">Seryl-tRNA synthetase</fullName>
        <shortName evidence="1">SerRS</shortName>
    </alternativeName>
    <alternativeName>
        <fullName evidence="1">Seryl-tRNA(Ser/Sec) synthetase</fullName>
    </alternativeName>
</protein>
<name>SYS_BORA1</name>
<reference key="1">
    <citation type="journal article" date="2006" name="J. Bacteriol.">
        <title>Comparison of the genome sequence of the poultry pathogen Bordetella avium with those of B. bronchiseptica, B. pertussis, and B. parapertussis reveals extensive diversity in surface structures associated with host interaction.</title>
        <authorList>
            <person name="Sebaihia M."/>
            <person name="Preston A."/>
            <person name="Maskell D.J."/>
            <person name="Kuzmiak H."/>
            <person name="Connell T.D."/>
            <person name="King N.D."/>
            <person name="Orndorff P.E."/>
            <person name="Miyamoto D.M."/>
            <person name="Thomson N.R."/>
            <person name="Harris D."/>
            <person name="Goble A."/>
            <person name="Lord A."/>
            <person name="Murphy L."/>
            <person name="Quail M.A."/>
            <person name="Rutter S."/>
            <person name="Squares R."/>
            <person name="Squares S."/>
            <person name="Woodward J."/>
            <person name="Parkhill J."/>
            <person name="Temple L.M."/>
        </authorList>
    </citation>
    <scope>NUCLEOTIDE SEQUENCE [LARGE SCALE GENOMIC DNA]</scope>
    <source>
        <strain>197N</strain>
    </source>
</reference>
<organism>
    <name type="scientific">Bordetella avium (strain 197N)</name>
    <dbReference type="NCBI Taxonomy" id="360910"/>
    <lineage>
        <taxon>Bacteria</taxon>
        <taxon>Pseudomonadati</taxon>
        <taxon>Pseudomonadota</taxon>
        <taxon>Betaproteobacteria</taxon>
        <taxon>Burkholderiales</taxon>
        <taxon>Alcaligenaceae</taxon>
        <taxon>Bordetella</taxon>
    </lineage>
</organism>
<dbReference type="EC" id="6.1.1.11" evidence="1"/>
<dbReference type="EMBL" id="AM167904">
    <property type="protein sequence ID" value="CAJ50296.1"/>
    <property type="molecule type" value="Genomic_DNA"/>
</dbReference>
<dbReference type="RefSeq" id="WP_012418328.1">
    <property type="nucleotide sequence ID" value="NC_010645.1"/>
</dbReference>
<dbReference type="SMR" id="Q2KWF5"/>
<dbReference type="STRING" id="360910.BAV2685"/>
<dbReference type="KEGG" id="bav:BAV2685"/>
<dbReference type="eggNOG" id="COG0172">
    <property type="taxonomic scope" value="Bacteria"/>
</dbReference>
<dbReference type="HOGENOM" id="CLU_023797_1_1_4"/>
<dbReference type="OrthoDB" id="9804647at2"/>
<dbReference type="UniPathway" id="UPA00906">
    <property type="reaction ID" value="UER00895"/>
</dbReference>
<dbReference type="Proteomes" id="UP000001977">
    <property type="component" value="Chromosome"/>
</dbReference>
<dbReference type="GO" id="GO:0005737">
    <property type="term" value="C:cytoplasm"/>
    <property type="evidence" value="ECO:0007669"/>
    <property type="project" value="UniProtKB-SubCell"/>
</dbReference>
<dbReference type="GO" id="GO:0005524">
    <property type="term" value="F:ATP binding"/>
    <property type="evidence" value="ECO:0007669"/>
    <property type="project" value="UniProtKB-UniRule"/>
</dbReference>
<dbReference type="GO" id="GO:0004828">
    <property type="term" value="F:serine-tRNA ligase activity"/>
    <property type="evidence" value="ECO:0007669"/>
    <property type="project" value="UniProtKB-UniRule"/>
</dbReference>
<dbReference type="GO" id="GO:0016260">
    <property type="term" value="P:selenocysteine biosynthetic process"/>
    <property type="evidence" value="ECO:0007669"/>
    <property type="project" value="UniProtKB-UniRule"/>
</dbReference>
<dbReference type="GO" id="GO:0006434">
    <property type="term" value="P:seryl-tRNA aminoacylation"/>
    <property type="evidence" value="ECO:0007669"/>
    <property type="project" value="UniProtKB-UniRule"/>
</dbReference>
<dbReference type="CDD" id="cd00770">
    <property type="entry name" value="SerRS_core"/>
    <property type="match status" value="1"/>
</dbReference>
<dbReference type="Gene3D" id="3.30.930.10">
    <property type="entry name" value="Bira Bifunctional Protein, Domain 2"/>
    <property type="match status" value="1"/>
</dbReference>
<dbReference type="Gene3D" id="1.10.287.40">
    <property type="entry name" value="Serine-tRNA synthetase, tRNA binding domain"/>
    <property type="match status" value="1"/>
</dbReference>
<dbReference type="HAMAP" id="MF_00176">
    <property type="entry name" value="Ser_tRNA_synth_type1"/>
    <property type="match status" value="1"/>
</dbReference>
<dbReference type="InterPro" id="IPR002314">
    <property type="entry name" value="aa-tRNA-synt_IIb"/>
</dbReference>
<dbReference type="InterPro" id="IPR006195">
    <property type="entry name" value="aa-tRNA-synth_II"/>
</dbReference>
<dbReference type="InterPro" id="IPR045864">
    <property type="entry name" value="aa-tRNA-synth_II/BPL/LPL"/>
</dbReference>
<dbReference type="InterPro" id="IPR002317">
    <property type="entry name" value="Ser-tRNA-ligase_type_1"/>
</dbReference>
<dbReference type="InterPro" id="IPR015866">
    <property type="entry name" value="Ser-tRNA-synth_1_N"/>
</dbReference>
<dbReference type="InterPro" id="IPR042103">
    <property type="entry name" value="SerRS_1_N_sf"/>
</dbReference>
<dbReference type="InterPro" id="IPR033729">
    <property type="entry name" value="SerRS_core"/>
</dbReference>
<dbReference type="InterPro" id="IPR010978">
    <property type="entry name" value="tRNA-bd_arm"/>
</dbReference>
<dbReference type="NCBIfam" id="TIGR00414">
    <property type="entry name" value="serS"/>
    <property type="match status" value="1"/>
</dbReference>
<dbReference type="PANTHER" id="PTHR43697:SF1">
    <property type="entry name" value="SERINE--TRNA LIGASE"/>
    <property type="match status" value="1"/>
</dbReference>
<dbReference type="PANTHER" id="PTHR43697">
    <property type="entry name" value="SERYL-TRNA SYNTHETASE"/>
    <property type="match status" value="1"/>
</dbReference>
<dbReference type="Pfam" id="PF02403">
    <property type="entry name" value="Seryl_tRNA_N"/>
    <property type="match status" value="1"/>
</dbReference>
<dbReference type="Pfam" id="PF00587">
    <property type="entry name" value="tRNA-synt_2b"/>
    <property type="match status" value="1"/>
</dbReference>
<dbReference type="PIRSF" id="PIRSF001529">
    <property type="entry name" value="Ser-tRNA-synth_IIa"/>
    <property type="match status" value="1"/>
</dbReference>
<dbReference type="PRINTS" id="PR00981">
    <property type="entry name" value="TRNASYNTHSER"/>
</dbReference>
<dbReference type="SUPFAM" id="SSF55681">
    <property type="entry name" value="Class II aaRS and biotin synthetases"/>
    <property type="match status" value="1"/>
</dbReference>
<dbReference type="SUPFAM" id="SSF46589">
    <property type="entry name" value="tRNA-binding arm"/>
    <property type="match status" value="1"/>
</dbReference>
<dbReference type="PROSITE" id="PS50862">
    <property type="entry name" value="AA_TRNA_LIGASE_II"/>
    <property type="match status" value="1"/>
</dbReference>
<gene>
    <name evidence="1" type="primary">serS</name>
    <name type="ordered locus">BAV2685</name>
</gene>
<feature type="chain" id="PRO_1000019621" description="Serine--tRNA ligase">
    <location>
        <begin position="1"/>
        <end position="449"/>
    </location>
</feature>
<feature type="binding site" evidence="1">
    <location>
        <begin position="255"/>
        <end position="257"/>
    </location>
    <ligand>
        <name>L-serine</name>
        <dbReference type="ChEBI" id="CHEBI:33384"/>
    </ligand>
</feature>
<feature type="binding site" evidence="1">
    <location>
        <begin position="286"/>
        <end position="288"/>
    </location>
    <ligand>
        <name>ATP</name>
        <dbReference type="ChEBI" id="CHEBI:30616"/>
    </ligand>
</feature>
<feature type="binding site" evidence="1">
    <location>
        <position position="309"/>
    </location>
    <ligand>
        <name>L-serine</name>
        <dbReference type="ChEBI" id="CHEBI:33384"/>
    </ligand>
</feature>
<feature type="binding site" evidence="1">
    <location>
        <begin position="373"/>
        <end position="376"/>
    </location>
    <ligand>
        <name>ATP</name>
        <dbReference type="ChEBI" id="CHEBI:30616"/>
    </ligand>
</feature>
<feature type="binding site" evidence="1">
    <location>
        <position position="409"/>
    </location>
    <ligand>
        <name>L-serine</name>
        <dbReference type="ChEBI" id="CHEBI:33384"/>
    </ligand>
</feature>
<keyword id="KW-0030">Aminoacyl-tRNA synthetase</keyword>
<keyword id="KW-0067">ATP-binding</keyword>
<keyword id="KW-0963">Cytoplasm</keyword>
<keyword id="KW-0436">Ligase</keyword>
<keyword id="KW-0547">Nucleotide-binding</keyword>
<keyword id="KW-0648">Protein biosynthesis</keyword>
<keyword id="KW-1185">Reference proteome</keyword>
<sequence>MLDPILLRKDLQTVVDRLQSRGVSFDTERFNDLESRRKLVQTETEALQARRNALAKQIGQLKAKGEDASAVMAESQALPGQLKQLEESLAMLQQQLNELLMSVPNLPHASVPVGASSDDNVEVRRWLPAEAGADGNPAPLGFAPRDHVAIGEPLGLDFDTAAKLSGARFSFMRGQMARLHRALAQFMLDLQTGEHGYTECYTPYIVNSSTLYGTGQLPKFKDDMFFVTKGGGDDDPKVDEQGKPLAREDQYLISTSEITLTSVVRDTIVPGDVLPLRMTAHTPCFRSEAGSGGRDTRGMIRQHQFDKVEMVQVANPEQSYDALEQMVGHAEEVLRRLGLPYRVMLLCTGDMGFGAAKTYDLEVWLPAQNTWREISSVSNCESFQARRMQARFRADAKSKPEFVHTLNGSGLAVGRALVAVLENYQQEDGSVRIPEALRPYMGGIEQLKA</sequence>
<comment type="function">
    <text evidence="1">Catalyzes the attachment of serine to tRNA(Ser). Is also able to aminoacylate tRNA(Sec) with serine, to form the misacylated tRNA L-seryl-tRNA(Sec), which will be further converted into selenocysteinyl-tRNA(Sec).</text>
</comment>
<comment type="catalytic activity">
    <reaction evidence="1">
        <text>tRNA(Ser) + L-serine + ATP = L-seryl-tRNA(Ser) + AMP + diphosphate + H(+)</text>
        <dbReference type="Rhea" id="RHEA:12292"/>
        <dbReference type="Rhea" id="RHEA-COMP:9669"/>
        <dbReference type="Rhea" id="RHEA-COMP:9703"/>
        <dbReference type="ChEBI" id="CHEBI:15378"/>
        <dbReference type="ChEBI" id="CHEBI:30616"/>
        <dbReference type="ChEBI" id="CHEBI:33019"/>
        <dbReference type="ChEBI" id="CHEBI:33384"/>
        <dbReference type="ChEBI" id="CHEBI:78442"/>
        <dbReference type="ChEBI" id="CHEBI:78533"/>
        <dbReference type="ChEBI" id="CHEBI:456215"/>
        <dbReference type="EC" id="6.1.1.11"/>
    </reaction>
</comment>
<comment type="catalytic activity">
    <reaction evidence="1">
        <text>tRNA(Sec) + L-serine + ATP = L-seryl-tRNA(Sec) + AMP + diphosphate + H(+)</text>
        <dbReference type="Rhea" id="RHEA:42580"/>
        <dbReference type="Rhea" id="RHEA-COMP:9742"/>
        <dbReference type="Rhea" id="RHEA-COMP:10128"/>
        <dbReference type="ChEBI" id="CHEBI:15378"/>
        <dbReference type="ChEBI" id="CHEBI:30616"/>
        <dbReference type="ChEBI" id="CHEBI:33019"/>
        <dbReference type="ChEBI" id="CHEBI:33384"/>
        <dbReference type="ChEBI" id="CHEBI:78442"/>
        <dbReference type="ChEBI" id="CHEBI:78533"/>
        <dbReference type="ChEBI" id="CHEBI:456215"/>
        <dbReference type="EC" id="6.1.1.11"/>
    </reaction>
</comment>
<comment type="pathway">
    <text evidence="1">Aminoacyl-tRNA biosynthesis; selenocysteinyl-tRNA(Sec) biosynthesis; L-seryl-tRNA(Sec) from L-serine and tRNA(Sec): step 1/1.</text>
</comment>
<comment type="subunit">
    <text evidence="1">Homodimer. The tRNA molecule binds across the dimer.</text>
</comment>
<comment type="subcellular location">
    <subcellularLocation>
        <location evidence="1">Cytoplasm</location>
    </subcellularLocation>
</comment>
<comment type="domain">
    <text evidence="1">Consists of two distinct domains, a catalytic core and a N-terminal extension that is involved in tRNA binding.</text>
</comment>
<comment type="similarity">
    <text evidence="1">Belongs to the class-II aminoacyl-tRNA synthetase family. Type-1 seryl-tRNA synthetase subfamily.</text>
</comment>
<accession>Q2KWF5</accession>
<proteinExistence type="inferred from homology"/>
<evidence type="ECO:0000255" key="1">
    <source>
        <dbReference type="HAMAP-Rule" id="MF_00176"/>
    </source>
</evidence>